<gene>
    <name evidence="28" type="primary">Salp15</name>
</gene>
<organism>
    <name type="scientific">Ixodes scapularis</name>
    <name type="common">Black-legged tick</name>
    <name type="synonym">Deer tick</name>
    <dbReference type="NCBI Taxonomy" id="6945"/>
    <lineage>
        <taxon>Eukaryota</taxon>
        <taxon>Metazoa</taxon>
        <taxon>Ecdysozoa</taxon>
        <taxon>Arthropoda</taxon>
        <taxon>Chelicerata</taxon>
        <taxon>Arachnida</taxon>
        <taxon>Acari</taxon>
        <taxon>Parasitiformes</taxon>
        <taxon>Ixodida</taxon>
        <taxon>Ixodoidea</taxon>
        <taxon>Ixodidae</taxon>
        <taxon>Ixodinae</taxon>
        <taxon>Ixodes</taxon>
    </lineage>
</organism>
<protein>
    <recommendedName>
        <fullName evidence="19">Salivary protein 15</fullName>
        <shortName evidence="19 20 21 22">Salp15</shortName>
    </recommendedName>
</protein>
<name>SP15_IXOSC</name>
<sequence length="135" mass="14675">MESFVAMKVVCILFLVGVVAANESGPTKADASTADKDTKKNNVQLRFPNYISNHQKLALKLLKICKDSKSSHNSLSSRSSDVINDKYVDFKNCTFLCKHGNDVNVTLNLPEDTPCGPNGQTCAEKNKCVGHIPGC</sequence>
<comment type="function">
    <text evidence="1 5 6 7 8 9 10 11 13 14 17">Salivary tick protein that downregulates host immune system by binding to both dendritic cells, and CD4(+) T cells. Specifically binds to the CD4 coreceptor on T cells (PubMed:12121666, PubMed:17082567, PubMed:17343683). This interaction prevents the activation of the Src kinase, Lck, and its downstream substrate Zap-70, and results in deficient activation of PLCgamma1, the repression of calcium fluxes triggered by T-cell antigen receptor (TCR) ligation, and a subsequent reduction in interleukin-2 production (PubMed:12121666, PubMed:17082567, PubMed:17343683). This salivary protein also binds to DC-SIGN (CD209) on dendritic cells (DC) and activates the Raf-1 kinase/MEK signaling pathway that results in down-regulating expression of pro-inflammatory cytokines (PubMed:18282094). Furthermore, it inhibits T cell proliferation induced by DCs (PubMed:18282094). It also inhibits in vitro keratinocyte inflammation induced by Borrelia burgdorferi or by the major outer surface protein (OspC) of Borrelia (By similarity). In addition, it downregulates chemokines and monocyte chemoattractant protein 1, as well as several antimicrobial peptides such as defensins, cathelicidin, psoriasin, and RNase 7 (By similarity). Apart from its immunomodulatory activities, it is also associated with protection of Borrelia spirochetes from antibody-mediated killing through its binding to OspC (PubMed:16049492, PubMed:19917502). In vivo, tests on different immune disease animal models show promising therapeutic results, e.g., in inhibiting HIV infection, experimental autoimmune encephalomyelitis, transplantation rejection, and asthma (PubMed:17513755, PubMed:18162176, PubMed:20920474, PubMed:28878331).</text>
</comment>
<comment type="function">
    <text evidence="12 15">(Microbial infection) Protects Borrelia garinii (strains A87S and VSBP) from host complement-mediated killing.</text>
</comment>
<comment type="function">
    <text evidence="12">(Microbial infection) Partially protects Borrelia burgdorferi (strains VS215 and B31) from host complement-mediated killing.</text>
</comment>
<comment type="subunit">
    <text evidence="5 7 8 11 16 18">Monomer (PubMed:25628987, PubMed:35328554). Interacts with host CD4 (PubMed:12121666, PubMed:17082567, PubMed:17343683). Interacts with host DC-SIGN (CD209) (PubMed:18282094).</text>
</comment>
<comment type="subunit">
    <text evidence="6 16">(Microbial infection) Interacts with Borrelia outer surface protein C (OspC).</text>
</comment>
<comment type="subcellular location">
    <subcellularLocation>
        <location evidence="24">Secreted</location>
    </subcellularLocation>
</comment>
<comment type="tissue specificity">
    <text evidence="4 5">Expressed in salivary glands (PubMed:11574922). Detected in host skin, at the site of natural inoculation (PubMed:12121666).</text>
</comment>
<comment type="induction">
    <text evidence="4 6">By feeding (PubMed:11574922). By the presence of Borrelia burgdorferi (PubMed:16049492).</text>
</comment>
<comment type="PTM">
    <text evidence="5 16">Glycosylated.</text>
</comment>
<comment type="similarity">
    <text evidence="23">Belongs to the salp15 family.</text>
</comment>
<evidence type="ECO:0000250" key="1">
    <source>
        <dbReference type="UniProtKB" id="A8CZZ0"/>
    </source>
</evidence>
<evidence type="ECO:0000255" key="2"/>
<evidence type="ECO:0000255" key="3">
    <source>
        <dbReference type="PROSITE-ProRule" id="PRU00498"/>
    </source>
</evidence>
<evidence type="ECO:0000269" key="4">
    <source>
    </source>
</evidence>
<evidence type="ECO:0000269" key="5">
    <source>
    </source>
</evidence>
<evidence type="ECO:0000269" key="6">
    <source>
    </source>
</evidence>
<evidence type="ECO:0000269" key="7">
    <source>
    </source>
</evidence>
<evidence type="ECO:0000269" key="8">
    <source>
    </source>
</evidence>
<evidence type="ECO:0000269" key="9">
    <source>
    </source>
</evidence>
<evidence type="ECO:0000269" key="10">
    <source>
    </source>
</evidence>
<evidence type="ECO:0000269" key="11">
    <source>
    </source>
</evidence>
<evidence type="ECO:0000269" key="12">
    <source>
    </source>
</evidence>
<evidence type="ECO:0000269" key="13">
    <source>
    </source>
</evidence>
<evidence type="ECO:0000269" key="14">
    <source>
    </source>
</evidence>
<evidence type="ECO:0000269" key="15">
    <source>
    </source>
</evidence>
<evidence type="ECO:0000269" key="16">
    <source>
    </source>
</evidence>
<evidence type="ECO:0000269" key="17">
    <source>
    </source>
</evidence>
<evidence type="ECO:0000269" key="18">
    <source>
    </source>
</evidence>
<evidence type="ECO:0000303" key="19">
    <source>
    </source>
</evidence>
<evidence type="ECO:0000303" key="20">
    <source>
    </source>
</evidence>
<evidence type="ECO:0000303" key="21">
    <source>
    </source>
</evidence>
<evidence type="ECO:0000303" key="22">
    <source>
    </source>
</evidence>
<evidence type="ECO:0000305" key="23"/>
<evidence type="ECO:0000305" key="24">
    <source>
    </source>
</evidence>
<evidence type="ECO:0000305" key="25">
    <source>
    </source>
</evidence>
<evidence type="ECO:0000305" key="26">
    <source>
    </source>
</evidence>
<evidence type="ECO:0000305" key="27">
    <source>
    </source>
</evidence>
<evidence type="ECO:0000312" key="28">
    <source>
        <dbReference type="EMBL" id="AAK97817.1"/>
    </source>
</evidence>
<dbReference type="EMBL" id="AF209914">
    <property type="protein sequence ID" value="AAK97817.1"/>
    <property type="molecule type" value="mRNA"/>
</dbReference>
<dbReference type="BMRB" id="Q95WZ4"/>
<dbReference type="SMR" id="Q95WZ4"/>
<dbReference type="VEuPathDB" id="VectorBase:ISCP_007344"/>
<dbReference type="VEuPathDB" id="VectorBase:ISCW024513"/>
<dbReference type="Proteomes" id="UP000001555">
    <property type="component" value="Unplaced"/>
</dbReference>
<dbReference type="GO" id="GO:0005576">
    <property type="term" value="C:extracellular region"/>
    <property type="evidence" value="ECO:0007669"/>
    <property type="project" value="UniProtKB-SubCell"/>
</dbReference>
<dbReference type="InterPro" id="IPR021971">
    <property type="entry name" value="Salp15"/>
</dbReference>
<dbReference type="Pfam" id="PF12115">
    <property type="entry name" value="Salp15"/>
    <property type="match status" value="1"/>
</dbReference>
<feature type="signal peptide" evidence="2">
    <location>
        <begin position="1"/>
        <end position="21"/>
    </location>
</feature>
<feature type="chain" id="PRO_5004321343" description="Salivary protein 15" evidence="25">
    <location>
        <begin position="22"/>
        <end position="135"/>
    </location>
</feature>
<feature type="region of interest" description="Required for Borrelia OspC-binding" evidence="16">
    <location>
        <begin position="48"/>
        <end position="67"/>
    </location>
</feature>
<feature type="region of interest" description="CD4-binding" evidence="26 27">
    <location>
        <begin position="116"/>
        <end position="135"/>
    </location>
</feature>
<feature type="glycosylation site" description="N-linked (GlcNAc...) asparagine" evidence="3">
    <location>
        <position position="22"/>
    </location>
</feature>
<feature type="glycosylation site" description="N-linked (GlcNAc...) asparagine" evidence="3">
    <location>
        <position position="92"/>
    </location>
</feature>
<feature type="glycosylation site" description="N-linked (GlcNAc...) asparagine" evidence="3">
    <location>
        <position position="104"/>
    </location>
</feature>
<accession>Q95WZ4</accession>
<proteinExistence type="evidence at protein level"/>
<reference evidence="28" key="1">
    <citation type="journal article" date="2001" name="J. Infect. Dis.">
        <title>Salp25D, an Ixodes scapularis antioxidant, is 1 of 14 immunodominant antigens in engorged tick salivary glands.</title>
        <authorList>
            <person name="Das S."/>
            <person name="Banerjee G."/>
            <person name="DePonte K."/>
            <person name="Marcantonio N."/>
            <person name="Kantor F.S."/>
            <person name="Fikrig E."/>
        </authorList>
    </citation>
    <scope>NUCLEOTIDE SEQUENCE [MRNA]</scope>
    <scope>INDUCTION BY FEEDING</scope>
    <source>
        <tissue>Salivary gland</tissue>
    </source>
</reference>
<reference key="2">
    <citation type="journal article" date="2002" name="Immunity">
        <title>Salp15, an ixodes scapularis salivary protein, inhibits CD4(+) T cell activation.</title>
        <authorList>
            <person name="Anguita J."/>
            <person name="Ramamoorthi N."/>
            <person name="Hovius J.W."/>
            <person name="Das S."/>
            <person name="Thomas V."/>
            <person name="Persinski R."/>
            <person name="Conze D."/>
            <person name="Askenase P.W."/>
            <person name="Rincon M."/>
            <person name="Kantor F.S."/>
            <person name="Fikrig E."/>
        </authorList>
    </citation>
    <scope>FUNCTION</scope>
    <scope>INTERACTION WITH CD4</scope>
    <scope>GLYCOSYLATION</scope>
    <scope>TISSUE SPECIFICITY</scope>
    <scope>RECOMBINANT EXPRESSION</scope>
    <source>
        <tissue>Salivary gland</tissue>
    </source>
</reference>
<reference key="3">
    <citation type="journal article" date="2005" name="Nature">
        <title>The Lyme disease agent exploits a tick protein to infect the mammalian host.</title>
        <authorList>
            <person name="Ramamoorthi N."/>
            <person name="Narasimhan S."/>
            <person name="Pal U."/>
            <person name="Bao F."/>
            <person name="Yang X.F."/>
            <person name="Fish D."/>
            <person name="Anguita J."/>
            <person name="Norgard M.V."/>
            <person name="Kantor F.S."/>
            <person name="Anderson J.F."/>
            <person name="Koski R.A."/>
            <person name="Fikrig E."/>
        </authorList>
    </citation>
    <scope>FUNCTION</scope>
    <scope>INTERACTION WITH BORRELIA OUTER SURFACE PROTEIN C</scope>
    <scope>INDUCTION BY THE PRESENCE OF B.BURGDORFERI</scope>
</reference>
<reference key="4">
    <citation type="journal article" date="2006" name="J. Immunol.">
        <title>CD4 is the receptor for the tick saliva immunosuppressor, Salp15.</title>
        <authorList>
            <person name="Garg R."/>
            <person name="Juncadella I.J."/>
            <person name="Ramamoorthi N."/>
            <person name="Ashish X."/>
            <person name="Ananthanarayanan S.K."/>
            <person name="Thomas V."/>
            <person name="Rincon M."/>
            <person name="Krueger J.K."/>
            <person name="Fikrig E."/>
            <person name="Yengo C.M."/>
            <person name="Anguita J."/>
        </authorList>
    </citation>
    <scope>FUNCTION</scope>
    <scope>INTERACTION WITH CD4</scope>
    <scope>SYNTHESIS OF 116-135</scope>
    <scope>RECOMBINANT EXPRESSION</scope>
</reference>
<reference key="5">
    <citation type="journal article" date="2007" name="FEMS Immunol. Med. Microbiol.">
        <title>T-cell signaling pathways inhibited by the tick saliva immunosuppressor, Salp15.</title>
        <authorList>
            <person name="Juncadella I.J."/>
            <person name="Garg R."/>
            <person name="Ananthnarayanan S.K."/>
            <person name="Yengo C.M."/>
            <person name="Anguita J."/>
        </authorList>
    </citation>
    <scope>FUNCTION</scope>
    <scope>INTERACTION WITH CD4</scope>
    <scope>SYNTHESIS OF 116-135</scope>
    <scope>RECOMBINANT EXPRESSION</scope>
</reference>
<reference key="6">
    <citation type="journal article" date="2007" name="J. Immunol.">
        <title>The tick salivary protein, Salp15, inhibits the development of experimental asthma.</title>
        <authorList>
            <person name="Paveglio S.A."/>
            <person name="Allard J."/>
            <person name="Mayette J."/>
            <person name="Whittaker L.A."/>
            <person name="Juncadella I."/>
            <person name="Anguita J."/>
            <person name="Poynter M.E."/>
        </authorList>
    </citation>
    <scope>FUNCTION</scope>
</reference>
<reference key="7">
    <citation type="journal article" date="2008" name="Biochem. Biophys. Res. Commun.">
        <title>The Ixodes scapularis salivary protein, salp15, prevents the association of HIV-1 gp120 and CD4.</title>
        <authorList>
            <person name="Juncadella I.J."/>
            <person name="Garg R."/>
            <person name="Bates T.C."/>
            <person name="Olivera E.R."/>
            <person name="Anguita J."/>
        </authorList>
    </citation>
    <scope>FUNCTION</scope>
</reference>
<reference key="8">
    <citation type="journal article" date="2008" name="Infect. Immun.">
        <title>The tick salivary protein Salp15 inhibits the killing of serum-sensitive Borrelia burgdorferi sensu lato isolates.</title>
        <authorList>
            <person name="Schuijt T.J."/>
            <person name="Hovius J.W."/>
            <person name="van Burgel N.D."/>
            <person name="Ramamoorthi N."/>
            <person name="Fikrig E."/>
            <person name="van Dam A.P."/>
        </authorList>
    </citation>
    <scope>FUNCTION (MICROBIAL INFECTION)</scope>
</reference>
<reference key="9">
    <citation type="journal article" date="2008" name="PLoS Pathog.">
        <title>Salp15 binding to DC-SIGN inhibits cytokine expression by impairing both nucleosome remodeling and mRNA stabilization.</title>
        <authorList>
            <person name="Hovius J.W."/>
            <person name="de Jong M.A."/>
            <person name="den Dunnen J."/>
            <person name="Litjens M."/>
            <person name="Fikrig E."/>
            <person name="van der Poll T."/>
            <person name="Gringhuis S.I."/>
            <person name="Geijtenbeek T.B."/>
        </authorList>
    </citation>
    <scope>FUNCTION</scope>
    <scope>INTERACTION WITH DC-SIGN (CD209)</scope>
    <scope>RECOMBINANT EXPRESSION</scope>
</reference>
<reference key="10">
    <citation type="journal article" date="2009" name="Cell Host Microbe">
        <title>Antibodies against a tick protein, Salp15, protect mice from the Lyme disease agent.</title>
        <authorList>
            <person name="Dai J."/>
            <person name="Wang P."/>
            <person name="Adusumilli S."/>
            <person name="Booth C.J."/>
            <person name="Narasimhan S."/>
            <person name="Anguita J."/>
            <person name="Fikrig E."/>
        </authorList>
    </citation>
    <scope>FUNCTION</scope>
</reference>
<reference key="11">
    <citation type="journal article" date="2010" name="Biochem. Biophys. Res. Commun.">
        <title>The tick saliva immunosuppressor, Salp15, contributes to Th17-induced pathology during Experimental Autoimmune Encephalomyelitis.</title>
        <authorList>
            <person name="Juncadella I.J."/>
            <person name="Bates T.C."/>
            <person name="Suleiman R."/>
            <person name="Monteagudo-Mera A."/>
            <person name="Olson C.M. Jr."/>
            <person name="Navasa N."/>
            <person name="Olivera E.R."/>
            <person name="Osborne B.A."/>
            <person name="Anguita J."/>
        </authorList>
    </citation>
    <scope>FUNCTION</scope>
</reference>
<reference key="12">
    <citation type="journal article" date="2011" name="PLoS ONE">
        <title>Identification and characterization of Ixodes scapularis antigens that elicit tick immunity using yeast surface display.</title>
        <authorList>
            <person name="Schuijt T.J."/>
            <person name="Narasimhan S."/>
            <person name="Daffre S."/>
            <person name="DePonte K."/>
            <person name="Hovius J.W."/>
            <person name="Van't Veer C."/>
            <person name="van der Poll T."/>
            <person name="Bakhtiari K."/>
            <person name="Meijers J.C."/>
            <person name="Boder E.T."/>
            <person name="van Dam A.P."/>
            <person name="Fikrig E."/>
        </authorList>
    </citation>
    <scope>FUNCTION (MICROBIAL INFECTION)</scope>
</reference>
<reference evidence="23" key="13">
    <citation type="journal article" date="2015" name="FEBS Open Bio">
        <title>Soluble cysteine-rich tick saliva proteins Salp15 and Iric-1 from E. coli.</title>
        <authorList>
            <person name="Kolb P."/>
            <person name="Vorreiter J."/>
            <person name="Habicht J."/>
            <person name="Bentrop D."/>
            <person name="Wallich R."/>
            <person name="Nassal M."/>
        </authorList>
    </citation>
    <scope>SUBUNIT</scope>
    <scope>INTERACTION WITH BORRELIA OUTER SURFACE PROTEIN C (OSPC)</scope>
    <scope>GLYCOSYLATION</scope>
    <scope>BORRELIA OSPC-BINDING REGION</scope>
</reference>
<reference key="14">
    <citation type="journal article" date="2017" name="Sci. Rep.">
        <title>The immunosuppressive effect of the tick protein, Salp15, is long-lasting and persists in a murine model of hematopoietic transplant.</title>
        <authorList>
            <person name="Tomas-Cortazar J."/>
            <person name="Martin-Ruiz I."/>
            <person name="Barriales D."/>
            <person name="Pascual-Itoiz M.A."/>
            <person name="de Juan V.G."/>
            <person name="Caro-Maldonado A."/>
            <person name="Merino N."/>
            <person name="Marina A."/>
            <person name="Blanco F.J."/>
            <person name="Flores J.M."/>
            <person name="Sutherland J.D."/>
            <person name="Barrio R."/>
            <person name="Rojas A."/>
            <person name="Martinez-Chantar M.L."/>
            <person name="Carracedo A."/>
            <person name="Simo C."/>
            <person name="Garcia-Canas V."/>
            <person name="Abecia L."/>
            <person name="Lavin J.L."/>
            <person name="Aransay A.M."/>
            <person name="Rodriguez H."/>
            <person name="Anguita J."/>
        </authorList>
    </citation>
    <scope>FUNCTION</scope>
</reference>
<reference evidence="23" key="15">
    <citation type="journal article" date="2022" name="Int. J. Mol. Sci.">
        <title>Structural Analysis of the Black-Legged Tick Saliva Protein Salp15.</title>
        <authorList>
            <person name="Chaves-Arquero B."/>
            <person name="Persson C."/>
            <person name="Merino N."/>
            <person name="Tomas-Cortazar J."/>
            <person name="Rojas A.L."/>
            <person name="Anguita J."/>
            <person name="Blanco F.J."/>
        </authorList>
    </citation>
    <scope>SUBUNIT</scope>
</reference>
<keyword id="KW-0325">Glycoprotein</keyword>
<keyword id="KW-1185">Reference proteome</keyword>
<keyword id="KW-0964">Secreted</keyword>
<keyword id="KW-0732">Signal</keyword>